<proteinExistence type="inferred from homology"/>
<feature type="chain" id="PRO_0000165507" description="Holliday junction branch migration complex subunit RuvB">
    <location>
        <begin position="1"/>
        <end position="355"/>
    </location>
</feature>
<feature type="region of interest" description="Large ATPase domain (RuvB-L)" evidence="1">
    <location>
        <begin position="4"/>
        <end position="190"/>
    </location>
</feature>
<feature type="region of interest" description="Small ATPAse domain (RuvB-S)" evidence="1">
    <location>
        <begin position="191"/>
        <end position="261"/>
    </location>
</feature>
<feature type="region of interest" description="Head domain (RuvB-H)" evidence="1">
    <location>
        <begin position="264"/>
        <end position="355"/>
    </location>
</feature>
<feature type="binding site" evidence="1">
    <location>
        <position position="29"/>
    </location>
    <ligand>
        <name>ATP</name>
        <dbReference type="ChEBI" id="CHEBI:30616"/>
    </ligand>
</feature>
<feature type="binding site" evidence="1">
    <location>
        <position position="30"/>
    </location>
    <ligand>
        <name>ATP</name>
        <dbReference type="ChEBI" id="CHEBI:30616"/>
    </ligand>
</feature>
<feature type="binding site" evidence="1">
    <location>
        <position position="71"/>
    </location>
    <ligand>
        <name>ATP</name>
        <dbReference type="ChEBI" id="CHEBI:30616"/>
    </ligand>
</feature>
<feature type="binding site" evidence="1">
    <location>
        <position position="74"/>
    </location>
    <ligand>
        <name>ATP</name>
        <dbReference type="ChEBI" id="CHEBI:30616"/>
    </ligand>
</feature>
<feature type="binding site" evidence="1">
    <location>
        <position position="75"/>
    </location>
    <ligand>
        <name>ATP</name>
        <dbReference type="ChEBI" id="CHEBI:30616"/>
    </ligand>
</feature>
<feature type="binding site" evidence="1">
    <location>
        <position position="75"/>
    </location>
    <ligand>
        <name>Mg(2+)</name>
        <dbReference type="ChEBI" id="CHEBI:18420"/>
    </ligand>
</feature>
<feature type="binding site" evidence="1">
    <location>
        <position position="76"/>
    </location>
    <ligand>
        <name>ATP</name>
        <dbReference type="ChEBI" id="CHEBI:30616"/>
    </ligand>
</feature>
<feature type="binding site" evidence="1">
    <location>
        <begin position="137"/>
        <end position="139"/>
    </location>
    <ligand>
        <name>ATP</name>
        <dbReference type="ChEBI" id="CHEBI:30616"/>
    </ligand>
</feature>
<feature type="binding site" evidence="1">
    <location>
        <position position="180"/>
    </location>
    <ligand>
        <name>ATP</name>
        <dbReference type="ChEBI" id="CHEBI:30616"/>
    </ligand>
</feature>
<feature type="binding site" evidence="1">
    <location>
        <position position="190"/>
    </location>
    <ligand>
        <name>ATP</name>
        <dbReference type="ChEBI" id="CHEBI:30616"/>
    </ligand>
</feature>
<feature type="binding site" evidence="1">
    <location>
        <position position="227"/>
    </location>
    <ligand>
        <name>ATP</name>
        <dbReference type="ChEBI" id="CHEBI:30616"/>
    </ligand>
</feature>
<feature type="binding site" evidence="1">
    <location>
        <position position="300"/>
    </location>
    <ligand>
        <name>DNA</name>
        <dbReference type="ChEBI" id="CHEBI:16991"/>
    </ligand>
</feature>
<feature type="binding site" evidence="1">
    <location>
        <position position="319"/>
    </location>
    <ligand>
        <name>DNA</name>
        <dbReference type="ChEBI" id="CHEBI:16991"/>
    </ligand>
</feature>
<feature type="binding site" evidence="1">
    <location>
        <position position="324"/>
    </location>
    <ligand>
        <name>DNA</name>
        <dbReference type="ChEBI" id="CHEBI:16991"/>
    </ligand>
</feature>
<evidence type="ECO:0000255" key="1">
    <source>
        <dbReference type="HAMAP-Rule" id="MF_00016"/>
    </source>
</evidence>
<evidence type="ECO:0000269" key="2">
    <source>
    </source>
</evidence>
<evidence type="ECO:0000303" key="3">
    <source>
    </source>
</evidence>
<keyword id="KW-0067">ATP-binding</keyword>
<keyword id="KW-0963">Cytoplasm</keyword>
<keyword id="KW-0227">DNA damage</keyword>
<keyword id="KW-0233">DNA recombination</keyword>
<keyword id="KW-0234">DNA repair</keyword>
<keyword id="KW-0238">DNA-binding</keyword>
<keyword id="KW-0378">Hydrolase</keyword>
<keyword id="KW-0547">Nucleotide-binding</keyword>
<name>RUVB_BURCE</name>
<gene>
    <name evidence="1 3" type="primary">ruvB</name>
</gene>
<protein>
    <recommendedName>
        <fullName evidence="1">Holliday junction branch migration complex subunit RuvB</fullName>
        <ecNumber evidence="1">3.6.4.-</ecNumber>
    </recommendedName>
</protein>
<organism>
    <name type="scientific">Burkholderia cepacia</name>
    <name type="common">Pseudomonas cepacia</name>
    <dbReference type="NCBI Taxonomy" id="292"/>
    <lineage>
        <taxon>Bacteria</taxon>
        <taxon>Pseudomonadati</taxon>
        <taxon>Pseudomonadota</taxon>
        <taxon>Betaproteobacteria</taxon>
        <taxon>Burkholderiales</taxon>
        <taxon>Burkholderiaceae</taxon>
        <taxon>Burkholderia</taxon>
        <taxon>Burkholderia cepacia complex</taxon>
    </lineage>
</organism>
<sequence length="355" mass="38911">MIETDKLAAERIIAATPASSHEEVFERALRPRQLDDYVGQEKVRGQLEIFIEAAKRRSEPLDHVLLFGPPGLGKTTLAHIIAREMGVNLRQTSGPVLERAGDLAALLTNLEANDVLFIDEIHRLSPVVEEILYPALEDYQIDIMIGEGPAARSVKLDLQPFTLVGATTRAGMLTNPLRDRFGIVARLEFYDAEQLSRIVRRSAALLNAQIDPNGALEIAKRSRGTPRIANRLLRRVRDYAEVKADGQITAAVADAALAMLDVDPVGFDLMDRKLLEAILHKFDGGPVGIDNLAAAIGEERDTIEDVLEPYLIQQGFLQRTPRGRVATLLTYRHFGLSAPAAGSAEGSMWNTPDGA</sequence>
<accession>Q93LP2</accession>
<reference key="1">
    <citation type="journal article" date="2001" name="Appl. Environ. Microbiol.">
        <title>Requirement of DNA repair mechanisms for survival of Burkholderia cepacia G4 upon degradation of trichloroethylene.</title>
        <authorList>
            <person name="Yeager C.M."/>
            <person name="Bottomley P.J."/>
            <person name="Arp D.J."/>
        </authorList>
    </citation>
    <scope>NUCLEOTIDE SEQUENCE [GENOMIC DNA]</scope>
    <scope>DISRUPTION PHENOTYPE</scope>
    <source>
        <strain>G4</strain>
    </source>
</reference>
<dbReference type="EC" id="3.6.4.-" evidence="1"/>
<dbReference type="EMBL" id="AY036067">
    <property type="protein sequence ID" value="AAK64609.1"/>
    <property type="molecule type" value="Genomic_DNA"/>
</dbReference>
<dbReference type="SMR" id="Q93LP2"/>
<dbReference type="STRING" id="292.WI67_03210"/>
<dbReference type="eggNOG" id="COG2255">
    <property type="taxonomic scope" value="Bacteria"/>
</dbReference>
<dbReference type="GO" id="GO:0005737">
    <property type="term" value="C:cytoplasm"/>
    <property type="evidence" value="ECO:0007669"/>
    <property type="project" value="UniProtKB-SubCell"/>
</dbReference>
<dbReference type="GO" id="GO:0048476">
    <property type="term" value="C:Holliday junction resolvase complex"/>
    <property type="evidence" value="ECO:0007669"/>
    <property type="project" value="UniProtKB-UniRule"/>
</dbReference>
<dbReference type="GO" id="GO:0005524">
    <property type="term" value="F:ATP binding"/>
    <property type="evidence" value="ECO:0007669"/>
    <property type="project" value="UniProtKB-UniRule"/>
</dbReference>
<dbReference type="GO" id="GO:0016887">
    <property type="term" value="F:ATP hydrolysis activity"/>
    <property type="evidence" value="ECO:0007669"/>
    <property type="project" value="InterPro"/>
</dbReference>
<dbReference type="GO" id="GO:0000400">
    <property type="term" value="F:four-way junction DNA binding"/>
    <property type="evidence" value="ECO:0007669"/>
    <property type="project" value="UniProtKB-UniRule"/>
</dbReference>
<dbReference type="GO" id="GO:0009378">
    <property type="term" value="F:four-way junction helicase activity"/>
    <property type="evidence" value="ECO:0007669"/>
    <property type="project" value="InterPro"/>
</dbReference>
<dbReference type="GO" id="GO:0006310">
    <property type="term" value="P:DNA recombination"/>
    <property type="evidence" value="ECO:0007669"/>
    <property type="project" value="UniProtKB-UniRule"/>
</dbReference>
<dbReference type="GO" id="GO:0006281">
    <property type="term" value="P:DNA repair"/>
    <property type="evidence" value="ECO:0007669"/>
    <property type="project" value="UniProtKB-UniRule"/>
</dbReference>
<dbReference type="CDD" id="cd00009">
    <property type="entry name" value="AAA"/>
    <property type="match status" value="1"/>
</dbReference>
<dbReference type="FunFam" id="1.10.10.10:FF:000086">
    <property type="entry name" value="Holliday junction ATP-dependent DNA helicase RuvB"/>
    <property type="match status" value="1"/>
</dbReference>
<dbReference type="FunFam" id="1.10.8.60:FF:000023">
    <property type="entry name" value="Holliday junction ATP-dependent DNA helicase RuvB"/>
    <property type="match status" value="1"/>
</dbReference>
<dbReference type="FunFam" id="3.40.50.300:FF:000073">
    <property type="entry name" value="Holliday junction ATP-dependent DNA helicase RuvB"/>
    <property type="match status" value="1"/>
</dbReference>
<dbReference type="Gene3D" id="1.10.8.60">
    <property type="match status" value="1"/>
</dbReference>
<dbReference type="Gene3D" id="3.40.50.300">
    <property type="entry name" value="P-loop containing nucleotide triphosphate hydrolases"/>
    <property type="match status" value="1"/>
</dbReference>
<dbReference type="Gene3D" id="1.10.10.10">
    <property type="entry name" value="Winged helix-like DNA-binding domain superfamily/Winged helix DNA-binding domain"/>
    <property type="match status" value="1"/>
</dbReference>
<dbReference type="HAMAP" id="MF_00016">
    <property type="entry name" value="DNA_HJ_migration_RuvB"/>
    <property type="match status" value="1"/>
</dbReference>
<dbReference type="InterPro" id="IPR003593">
    <property type="entry name" value="AAA+_ATPase"/>
</dbReference>
<dbReference type="InterPro" id="IPR041445">
    <property type="entry name" value="AAA_lid_4"/>
</dbReference>
<dbReference type="InterPro" id="IPR004605">
    <property type="entry name" value="DNA_helicase_Holl-junc_RuvB"/>
</dbReference>
<dbReference type="InterPro" id="IPR027417">
    <property type="entry name" value="P-loop_NTPase"/>
</dbReference>
<dbReference type="InterPro" id="IPR008824">
    <property type="entry name" value="RuvB-like_N"/>
</dbReference>
<dbReference type="InterPro" id="IPR008823">
    <property type="entry name" value="RuvB_C"/>
</dbReference>
<dbReference type="InterPro" id="IPR036388">
    <property type="entry name" value="WH-like_DNA-bd_sf"/>
</dbReference>
<dbReference type="InterPro" id="IPR036390">
    <property type="entry name" value="WH_DNA-bd_sf"/>
</dbReference>
<dbReference type="NCBIfam" id="NF000868">
    <property type="entry name" value="PRK00080.1"/>
    <property type="match status" value="1"/>
</dbReference>
<dbReference type="NCBIfam" id="TIGR00635">
    <property type="entry name" value="ruvB"/>
    <property type="match status" value="1"/>
</dbReference>
<dbReference type="PANTHER" id="PTHR42848">
    <property type="match status" value="1"/>
</dbReference>
<dbReference type="PANTHER" id="PTHR42848:SF1">
    <property type="entry name" value="HOLLIDAY JUNCTION BRANCH MIGRATION COMPLEX SUBUNIT RUVB"/>
    <property type="match status" value="1"/>
</dbReference>
<dbReference type="Pfam" id="PF17864">
    <property type="entry name" value="AAA_lid_4"/>
    <property type="match status" value="1"/>
</dbReference>
<dbReference type="Pfam" id="PF05491">
    <property type="entry name" value="RuvB_C"/>
    <property type="match status" value="1"/>
</dbReference>
<dbReference type="Pfam" id="PF05496">
    <property type="entry name" value="RuvB_N"/>
    <property type="match status" value="1"/>
</dbReference>
<dbReference type="PRINTS" id="PR00830">
    <property type="entry name" value="ENDOLAPTASE"/>
</dbReference>
<dbReference type="SMART" id="SM00382">
    <property type="entry name" value="AAA"/>
    <property type="match status" value="1"/>
</dbReference>
<dbReference type="SUPFAM" id="SSF52540">
    <property type="entry name" value="P-loop containing nucleoside triphosphate hydrolases"/>
    <property type="match status" value="1"/>
</dbReference>
<dbReference type="SUPFAM" id="SSF46785">
    <property type="entry name" value="Winged helix' DNA-binding domain"/>
    <property type="match status" value="1"/>
</dbReference>
<comment type="function">
    <text evidence="1">The RuvA-RuvB-RuvC complex processes Holliday junction (HJ) DNA during genetic recombination and DNA repair, while the RuvA-RuvB complex plays an important role in the rescue of blocked DNA replication forks via replication fork reversal (RFR). RuvA specifically binds to HJ cruciform DNA, conferring on it an open structure. The RuvB hexamer acts as an ATP-dependent pump, pulling dsDNA into and through the RuvAB complex. RuvB forms 2 homohexamers on either side of HJ DNA bound by 1 or 2 RuvA tetramers; 4 subunits per hexamer contact DNA at a time. Coordinated motions by a converter formed by DNA-disengaged RuvB subunits stimulates ATP hydrolysis and nucleotide exchange. Immobilization of the converter enables RuvB to convert the ATP-contained energy into a lever motion, pulling 2 nucleotides of DNA out of the RuvA tetramer per ATP hydrolyzed, thus driving DNA branch migration. The RuvB motors rotate together with the DNA substrate, which together with the progressing nucleotide cycle form the mechanistic basis for DNA recombination by continuous HJ branch migration. Branch migration allows RuvC to scan DNA until it finds its consensus sequence, where it cleaves and resolves cruciform DNA.</text>
</comment>
<comment type="catalytic activity">
    <reaction evidence="1">
        <text>ATP + H2O = ADP + phosphate + H(+)</text>
        <dbReference type="Rhea" id="RHEA:13065"/>
        <dbReference type="ChEBI" id="CHEBI:15377"/>
        <dbReference type="ChEBI" id="CHEBI:15378"/>
        <dbReference type="ChEBI" id="CHEBI:30616"/>
        <dbReference type="ChEBI" id="CHEBI:43474"/>
        <dbReference type="ChEBI" id="CHEBI:456216"/>
    </reaction>
</comment>
<comment type="subunit">
    <text evidence="1">Homohexamer. Forms an RuvA(8)-RuvB(12)-Holliday junction (HJ) complex. HJ DNA is sandwiched between 2 RuvA tetramers; dsDNA enters through RuvA and exits via RuvB. An RuvB hexamer assembles on each DNA strand where it exits the tetramer. Each RuvB hexamer is contacted by two RuvA subunits (via domain III) on 2 adjacent RuvB subunits; this complex drives branch migration. In the full resolvosome a probable DNA-RuvA(4)-RuvB(12)-RuvC(2) complex forms which resolves the HJ.</text>
</comment>
<comment type="subcellular location">
    <subcellularLocation>
        <location evidence="1">Cytoplasm</location>
    </subcellularLocation>
</comment>
<comment type="domain">
    <text evidence="1">Has 3 domains, the large (RuvB-L) and small ATPase (RuvB-S) domains and the C-terminal head (RuvB-H) domain. The head domain binds DNA, while the ATPase domains jointly bind ATP, ADP or are empty depending on the state of the subunit in the translocation cycle. During a single DNA translocation step the structure of each domain remains the same, but their relative positions change.</text>
</comment>
<comment type="disruption phenotype">
    <text evidence="2">Slight increase in sensitivity to trichloroethylene vapor, UV light or mitomycin C.</text>
</comment>
<comment type="similarity">
    <text evidence="1">Belongs to the RuvB family.</text>
</comment>